<gene>
    <name evidence="1" type="primary">glyQ</name>
    <name type="ordered locus">NMB1932</name>
</gene>
<sequence length="301" mass="34210">MLTFQQIIFKLQTFWADKGCTVIQPFDMEVGAGTSHPATCLRALGPEPWFAAYVQPSRRPKDGRYGDNPNRLQHYYQFQVALKPAPANIQDLYLDSLRELGIDPKVHDIRFVEDDWENPTLGAWGLGWEVWLNGMEVTQFTYFQQVGGIDCTPVLGEITYGIERLAMYLQGVENVYDLVWAKTLDGNTVTYGDVYHQNEVEQSTYNFEYSDADWLLRQFNDYEAQAKRLLAEENAALALPAYELVLKAGHTFNLLDARGAISVTERATYIGRIRALSRAVAQKYVESREKLGFPLMKANAA</sequence>
<organism>
    <name type="scientific">Neisseria meningitidis serogroup B (strain ATCC BAA-335 / MC58)</name>
    <dbReference type="NCBI Taxonomy" id="122586"/>
    <lineage>
        <taxon>Bacteria</taxon>
        <taxon>Pseudomonadati</taxon>
        <taxon>Pseudomonadota</taxon>
        <taxon>Betaproteobacteria</taxon>
        <taxon>Neisseriales</taxon>
        <taxon>Neisseriaceae</taxon>
        <taxon>Neisseria</taxon>
    </lineage>
</organism>
<accession>P67029</accession>
<accession>Q9JRC6</accession>
<evidence type="ECO:0000255" key="1">
    <source>
        <dbReference type="HAMAP-Rule" id="MF_00254"/>
    </source>
</evidence>
<proteinExistence type="inferred from homology"/>
<name>SYGA_NEIMB</name>
<protein>
    <recommendedName>
        <fullName evidence="1">Glycine--tRNA ligase alpha subunit</fullName>
        <ecNumber evidence="1">6.1.1.14</ecNumber>
    </recommendedName>
    <alternativeName>
        <fullName evidence="1">Glycyl-tRNA synthetase alpha subunit</fullName>
        <shortName evidence="1">GlyRS</shortName>
    </alternativeName>
</protein>
<dbReference type="EC" id="6.1.1.14" evidence="1"/>
<dbReference type="EMBL" id="AE002098">
    <property type="protein sequence ID" value="AAF42261.1"/>
    <property type="molecule type" value="Genomic_DNA"/>
</dbReference>
<dbReference type="PIR" id="E81024">
    <property type="entry name" value="E81024"/>
</dbReference>
<dbReference type="RefSeq" id="NP_274926.1">
    <property type="nucleotide sequence ID" value="NC_003112.2"/>
</dbReference>
<dbReference type="RefSeq" id="WP_002218046.1">
    <property type="nucleotide sequence ID" value="NC_003112.2"/>
</dbReference>
<dbReference type="SMR" id="P67029"/>
<dbReference type="FunCoup" id="P67029">
    <property type="interactions" value="369"/>
</dbReference>
<dbReference type="STRING" id="122586.NMB1932"/>
<dbReference type="PaxDb" id="122586-NMB1932"/>
<dbReference type="GeneID" id="93386838"/>
<dbReference type="KEGG" id="nme:NMB1932"/>
<dbReference type="PATRIC" id="fig|122586.8.peg.2460"/>
<dbReference type="HOGENOM" id="CLU_057066_1_0_4"/>
<dbReference type="InParanoid" id="P67029"/>
<dbReference type="OrthoDB" id="9802183at2"/>
<dbReference type="Proteomes" id="UP000000425">
    <property type="component" value="Chromosome"/>
</dbReference>
<dbReference type="GO" id="GO:0005737">
    <property type="term" value="C:cytoplasm"/>
    <property type="evidence" value="ECO:0007669"/>
    <property type="project" value="UniProtKB-SubCell"/>
</dbReference>
<dbReference type="GO" id="GO:0005524">
    <property type="term" value="F:ATP binding"/>
    <property type="evidence" value="ECO:0007669"/>
    <property type="project" value="UniProtKB-UniRule"/>
</dbReference>
<dbReference type="GO" id="GO:0004820">
    <property type="term" value="F:glycine-tRNA ligase activity"/>
    <property type="evidence" value="ECO:0007669"/>
    <property type="project" value="UniProtKB-UniRule"/>
</dbReference>
<dbReference type="GO" id="GO:0006426">
    <property type="term" value="P:glycyl-tRNA aminoacylation"/>
    <property type="evidence" value="ECO:0007669"/>
    <property type="project" value="UniProtKB-UniRule"/>
</dbReference>
<dbReference type="CDD" id="cd00733">
    <property type="entry name" value="GlyRS_alpha_core"/>
    <property type="match status" value="1"/>
</dbReference>
<dbReference type="FunFam" id="3.30.930.10:FF:000006">
    <property type="entry name" value="Glycine--tRNA ligase alpha subunit"/>
    <property type="match status" value="1"/>
</dbReference>
<dbReference type="Gene3D" id="3.30.930.10">
    <property type="entry name" value="Bira Bifunctional Protein, Domain 2"/>
    <property type="match status" value="1"/>
</dbReference>
<dbReference type="Gene3D" id="1.20.58.180">
    <property type="entry name" value="Class II aaRS and biotin synthetases, domain 2"/>
    <property type="match status" value="1"/>
</dbReference>
<dbReference type="HAMAP" id="MF_00254">
    <property type="entry name" value="Gly_tRNA_synth_alpha"/>
    <property type="match status" value="1"/>
</dbReference>
<dbReference type="InterPro" id="IPR045864">
    <property type="entry name" value="aa-tRNA-synth_II/BPL/LPL"/>
</dbReference>
<dbReference type="InterPro" id="IPR006194">
    <property type="entry name" value="Gly-tRNA-synth_heterodimer"/>
</dbReference>
<dbReference type="InterPro" id="IPR002310">
    <property type="entry name" value="Gly-tRNA_ligase_asu"/>
</dbReference>
<dbReference type="NCBIfam" id="TIGR00388">
    <property type="entry name" value="glyQ"/>
    <property type="match status" value="1"/>
</dbReference>
<dbReference type="NCBIfam" id="NF006827">
    <property type="entry name" value="PRK09348.1"/>
    <property type="match status" value="1"/>
</dbReference>
<dbReference type="PANTHER" id="PTHR30075:SF2">
    <property type="entry name" value="GLYCINE--TRNA LIGASE, CHLOROPLASTIC_MITOCHONDRIAL 2"/>
    <property type="match status" value="1"/>
</dbReference>
<dbReference type="PANTHER" id="PTHR30075">
    <property type="entry name" value="GLYCYL-TRNA SYNTHETASE"/>
    <property type="match status" value="1"/>
</dbReference>
<dbReference type="Pfam" id="PF02091">
    <property type="entry name" value="tRNA-synt_2e"/>
    <property type="match status" value="1"/>
</dbReference>
<dbReference type="PRINTS" id="PR01044">
    <property type="entry name" value="TRNASYNTHGA"/>
</dbReference>
<dbReference type="SUPFAM" id="SSF55681">
    <property type="entry name" value="Class II aaRS and biotin synthetases"/>
    <property type="match status" value="1"/>
</dbReference>
<dbReference type="PROSITE" id="PS50861">
    <property type="entry name" value="AA_TRNA_LIGASE_II_GLYAB"/>
    <property type="match status" value="1"/>
</dbReference>
<reference key="1">
    <citation type="journal article" date="2000" name="Science">
        <title>Complete genome sequence of Neisseria meningitidis serogroup B strain MC58.</title>
        <authorList>
            <person name="Tettelin H."/>
            <person name="Saunders N.J."/>
            <person name="Heidelberg J.F."/>
            <person name="Jeffries A.C."/>
            <person name="Nelson K.E."/>
            <person name="Eisen J.A."/>
            <person name="Ketchum K.A."/>
            <person name="Hood D.W."/>
            <person name="Peden J.F."/>
            <person name="Dodson R.J."/>
            <person name="Nelson W.C."/>
            <person name="Gwinn M.L."/>
            <person name="DeBoy R.T."/>
            <person name="Peterson J.D."/>
            <person name="Hickey E.K."/>
            <person name="Haft D.H."/>
            <person name="Salzberg S.L."/>
            <person name="White O."/>
            <person name="Fleischmann R.D."/>
            <person name="Dougherty B.A."/>
            <person name="Mason T.M."/>
            <person name="Ciecko A."/>
            <person name="Parksey D.S."/>
            <person name="Blair E."/>
            <person name="Cittone H."/>
            <person name="Clark E.B."/>
            <person name="Cotton M.D."/>
            <person name="Utterback T.R."/>
            <person name="Khouri H.M."/>
            <person name="Qin H."/>
            <person name="Vamathevan J.J."/>
            <person name="Gill J."/>
            <person name="Scarlato V."/>
            <person name="Masignani V."/>
            <person name="Pizza M."/>
            <person name="Grandi G."/>
            <person name="Sun L."/>
            <person name="Smith H.O."/>
            <person name="Fraser C.M."/>
            <person name="Moxon E.R."/>
            <person name="Rappuoli R."/>
            <person name="Venter J.C."/>
        </authorList>
    </citation>
    <scope>NUCLEOTIDE SEQUENCE [LARGE SCALE GENOMIC DNA]</scope>
    <source>
        <strain>ATCC BAA-335 / MC58</strain>
    </source>
</reference>
<keyword id="KW-0030">Aminoacyl-tRNA synthetase</keyword>
<keyword id="KW-0067">ATP-binding</keyword>
<keyword id="KW-0963">Cytoplasm</keyword>
<keyword id="KW-0436">Ligase</keyword>
<keyword id="KW-0547">Nucleotide-binding</keyword>
<keyword id="KW-0648">Protein biosynthesis</keyword>
<keyword id="KW-1185">Reference proteome</keyword>
<comment type="catalytic activity">
    <reaction evidence="1">
        <text>tRNA(Gly) + glycine + ATP = glycyl-tRNA(Gly) + AMP + diphosphate</text>
        <dbReference type="Rhea" id="RHEA:16013"/>
        <dbReference type="Rhea" id="RHEA-COMP:9664"/>
        <dbReference type="Rhea" id="RHEA-COMP:9683"/>
        <dbReference type="ChEBI" id="CHEBI:30616"/>
        <dbReference type="ChEBI" id="CHEBI:33019"/>
        <dbReference type="ChEBI" id="CHEBI:57305"/>
        <dbReference type="ChEBI" id="CHEBI:78442"/>
        <dbReference type="ChEBI" id="CHEBI:78522"/>
        <dbReference type="ChEBI" id="CHEBI:456215"/>
        <dbReference type="EC" id="6.1.1.14"/>
    </reaction>
</comment>
<comment type="subunit">
    <text evidence="1">Tetramer of two alpha and two beta subunits.</text>
</comment>
<comment type="subcellular location">
    <subcellularLocation>
        <location evidence="1">Cytoplasm</location>
    </subcellularLocation>
</comment>
<comment type="similarity">
    <text evidence="1">Belongs to the class-II aminoacyl-tRNA synthetase family.</text>
</comment>
<feature type="chain" id="PRO_0000072851" description="Glycine--tRNA ligase alpha subunit">
    <location>
        <begin position="1"/>
        <end position="301"/>
    </location>
</feature>